<organism>
    <name type="scientific">Schizosaccharomyces pombe (strain 972 / ATCC 24843)</name>
    <name type="common">Fission yeast</name>
    <dbReference type="NCBI Taxonomy" id="284812"/>
    <lineage>
        <taxon>Eukaryota</taxon>
        <taxon>Fungi</taxon>
        <taxon>Dikarya</taxon>
        <taxon>Ascomycota</taxon>
        <taxon>Taphrinomycotina</taxon>
        <taxon>Schizosaccharomycetes</taxon>
        <taxon>Schizosaccharomycetales</taxon>
        <taxon>Schizosaccharomycetaceae</taxon>
        <taxon>Schizosaccharomyces</taxon>
    </lineage>
</organism>
<feature type="chain" id="PRO_0000101856" description="Protein yop1">
    <location>
        <begin position="1"/>
        <end position="182"/>
    </location>
</feature>
<feature type="topological domain" description="Cytoplasmic" evidence="1">
    <location>
        <begin position="1"/>
        <end position="34"/>
    </location>
</feature>
<feature type="transmembrane region" description="Helical" evidence="1">
    <location>
        <begin position="35"/>
        <end position="54"/>
    </location>
</feature>
<feature type="topological domain" description="Lumenal" evidence="1">
    <location>
        <begin position="55"/>
        <end position="56"/>
    </location>
</feature>
<feature type="transmembrane region" description="Helical" evidence="1">
    <location>
        <begin position="57"/>
        <end position="75"/>
    </location>
</feature>
<feature type="topological domain" description="Cytoplasmic" evidence="1">
    <location>
        <begin position="76"/>
        <end position="85"/>
    </location>
</feature>
<feature type="transmembrane region" description="Helical" evidence="1">
    <location>
        <begin position="86"/>
        <end position="102"/>
    </location>
</feature>
<feature type="topological domain" description="Lumenal" evidence="1">
    <location>
        <begin position="103"/>
        <end position="105"/>
    </location>
</feature>
<feature type="transmembrane region" description="Helical" evidence="1">
    <location>
        <begin position="106"/>
        <end position="124"/>
    </location>
</feature>
<feature type="topological domain" description="Cytoplasmic" evidence="1">
    <location>
        <begin position="125"/>
        <end position="182"/>
    </location>
</feature>
<protein>
    <recommendedName>
        <fullName>Protein yop1</fullName>
    </recommendedName>
</protein>
<gene>
    <name type="primary">yop1</name>
    <name type="ORF">SPCC830.08c</name>
</gene>
<name>YOP1_SCHPO</name>
<comment type="function">
    <text evidence="1 2">Required to generate and maintain the structure of the tubular endoplasmic reticulum network and the vacuole. Induces high curvature in membranes and causes membrane tubule formation. Involved in membrane/vesicle trafficking (By similarity). Required for the correct positioning of the cellular division plane by delimiting the actomyosin ring assembly at the cell equator (PubMed:20434336).</text>
</comment>
<comment type="subunit">
    <text evidence="1 2">Oligomer (By similarity). Interacts with RTN1 and TTS1.</text>
</comment>
<comment type="subcellular location">
    <subcellularLocation>
        <location evidence="2">Endoplasmic reticulum membrane</location>
        <topology evidence="2">Multi-pass membrane protein</topology>
    </subcellularLocation>
    <subcellularLocation>
        <location evidence="2">Nucleus membrane</location>
        <topology evidence="2">Multi-pass membrane protein</topology>
    </subcellularLocation>
    <text>Enriched at the cell equator during mitosis.</text>
</comment>
<comment type="domain">
    <text evidence="1">The short lumenal loops between transmembrane domains 1 and 2 and between transmembrane domains 3 and 4 may impart a wedge-like configuration, thus deforming membranes.</text>
</comment>
<comment type="similarity">
    <text evidence="3">Belongs to the DP1 family.</text>
</comment>
<accession>Q9UU91</accession>
<sequence>MSFQVRVKQNMQDLDNRLAAFPQLNSLEKNFGVSKLYVFLTAAGIYALFLFLNWGGFLLTNLLAFAMPAFFSINAIETTNKADDTQWLTYYLVTSFLNVIEYWSQLILYYVPVYWLLKAIFLIWLALPKFNGATIIYRHLIRPYITPHVIRICKSVSRQNAAPAPTASSFAHTTATDIPPSI</sequence>
<reference key="1">
    <citation type="journal article" date="2002" name="Nature">
        <title>The genome sequence of Schizosaccharomyces pombe.</title>
        <authorList>
            <person name="Wood V."/>
            <person name="Gwilliam R."/>
            <person name="Rajandream M.A."/>
            <person name="Lyne M.H."/>
            <person name="Lyne R."/>
            <person name="Stewart A."/>
            <person name="Sgouros J.G."/>
            <person name="Peat N."/>
            <person name="Hayles J."/>
            <person name="Baker S.G."/>
            <person name="Basham D."/>
            <person name="Bowman S."/>
            <person name="Brooks K."/>
            <person name="Brown D."/>
            <person name="Brown S."/>
            <person name="Chillingworth T."/>
            <person name="Churcher C.M."/>
            <person name="Collins M."/>
            <person name="Connor R."/>
            <person name="Cronin A."/>
            <person name="Davis P."/>
            <person name="Feltwell T."/>
            <person name="Fraser A."/>
            <person name="Gentles S."/>
            <person name="Goble A."/>
            <person name="Hamlin N."/>
            <person name="Harris D.E."/>
            <person name="Hidalgo J."/>
            <person name="Hodgson G."/>
            <person name="Holroyd S."/>
            <person name="Hornsby T."/>
            <person name="Howarth S."/>
            <person name="Huckle E.J."/>
            <person name="Hunt S."/>
            <person name="Jagels K."/>
            <person name="James K.D."/>
            <person name="Jones L."/>
            <person name="Jones M."/>
            <person name="Leather S."/>
            <person name="McDonald S."/>
            <person name="McLean J."/>
            <person name="Mooney P."/>
            <person name="Moule S."/>
            <person name="Mungall K.L."/>
            <person name="Murphy L.D."/>
            <person name="Niblett D."/>
            <person name="Odell C."/>
            <person name="Oliver K."/>
            <person name="O'Neil S."/>
            <person name="Pearson D."/>
            <person name="Quail M.A."/>
            <person name="Rabbinowitsch E."/>
            <person name="Rutherford K.M."/>
            <person name="Rutter S."/>
            <person name="Saunders D."/>
            <person name="Seeger K."/>
            <person name="Sharp S."/>
            <person name="Skelton J."/>
            <person name="Simmonds M.N."/>
            <person name="Squares R."/>
            <person name="Squares S."/>
            <person name="Stevens K."/>
            <person name="Taylor K."/>
            <person name="Taylor R.G."/>
            <person name="Tivey A."/>
            <person name="Walsh S.V."/>
            <person name="Warren T."/>
            <person name="Whitehead S."/>
            <person name="Woodward J.R."/>
            <person name="Volckaert G."/>
            <person name="Aert R."/>
            <person name="Robben J."/>
            <person name="Grymonprez B."/>
            <person name="Weltjens I."/>
            <person name="Vanstreels E."/>
            <person name="Rieger M."/>
            <person name="Schaefer M."/>
            <person name="Mueller-Auer S."/>
            <person name="Gabel C."/>
            <person name="Fuchs M."/>
            <person name="Duesterhoeft A."/>
            <person name="Fritzc C."/>
            <person name="Holzer E."/>
            <person name="Moestl D."/>
            <person name="Hilbert H."/>
            <person name="Borzym K."/>
            <person name="Langer I."/>
            <person name="Beck A."/>
            <person name="Lehrach H."/>
            <person name="Reinhardt R."/>
            <person name="Pohl T.M."/>
            <person name="Eger P."/>
            <person name="Zimmermann W."/>
            <person name="Wedler H."/>
            <person name="Wambutt R."/>
            <person name="Purnelle B."/>
            <person name="Goffeau A."/>
            <person name="Cadieu E."/>
            <person name="Dreano S."/>
            <person name="Gloux S."/>
            <person name="Lelaure V."/>
            <person name="Mottier S."/>
            <person name="Galibert F."/>
            <person name="Aves S.J."/>
            <person name="Xiang Z."/>
            <person name="Hunt C."/>
            <person name="Moore K."/>
            <person name="Hurst S.M."/>
            <person name="Lucas M."/>
            <person name="Rochet M."/>
            <person name="Gaillardin C."/>
            <person name="Tallada V.A."/>
            <person name="Garzon A."/>
            <person name="Thode G."/>
            <person name="Daga R.R."/>
            <person name="Cruzado L."/>
            <person name="Jimenez J."/>
            <person name="Sanchez M."/>
            <person name="del Rey F."/>
            <person name="Benito J."/>
            <person name="Dominguez A."/>
            <person name="Revuelta J.L."/>
            <person name="Moreno S."/>
            <person name="Armstrong J."/>
            <person name="Forsburg S.L."/>
            <person name="Cerutti L."/>
            <person name="Lowe T."/>
            <person name="McCombie W.R."/>
            <person name="Paulsen I."/>
            <person name="Potashkin J."/>
            <person name="Shpakovski G.V."/>
            <person name="Ussery D."/>
            <person name="Barrell B.G."/>
            <person name="Nurse P."/>
        </authorList>
    </citation>
    <scope>NUCLEOTIDE SEQUENCE [LARGE SCALE GENOMIC DNA]</scope>
    <source>
        <strain>972 / ATCC 24843</strain>
    </source>
</reference>
<reference key="2">
    <citation type="journal article" date="2010" name="Curr. Biol.">
        <title>The cortical ER network limits the permissive zone for actomyosin ring assembly.</title>
        <authorList>
            <person name="Zhang D."/>
            <person name="Vjestica A."/>
            <person name="Oliferenko S."/>
        </authorList>
    </citation>
    <scope>SUBCELLULAR LOCATION</scope>
    <scope>INTERACTION WITH RTN1 AND TTS1</scope>
    <scope>FUNCTION</scope>
</reference>
<evidence type="ECO:0000250" key="1">
    <source>
        <dbReference type="UniProtKB" id="Q12402"/>
    </source>
</evidence>
<evidence type="ECO:0000269" key="2">
    <source>
    </source>
</evidence>
<evidence type="ECO:0000305" key="3"/>
<keyword id="KW-0131">Cell cycle</keyword>
<keyword id="KW-0132">Cell division</keyword>
<keyword id="KW-0256">Endoplasmic reticulum</keyword>
<keyword id="KW-0472">Membrane</keyword>
<keyword id="KW-0539">Nucleus</keyword>
<keyword id="KW-1185">Reference proteome</keyword>
<keyword id="KW-0812">Transmembrane</keyword>
<keyword id="KW-1133">Transmembrane helix</keyword>
<dbReference type="EMBL" id="CU329672">
    <property type="protein sequence ID" value="CAB52881.1"/>
    <property type="molecule type" value="Genomic_DNA"/>
</dbReference>
<dbReference type="PIR" id="T41634">
    <property type="entry name" value="T41634"/>
</dbReference>
<dbReference type="RefSeq" id="NP_588478.1">
    <property type="nucleotide sequence ID" value="NM_001023469.2"/>
</dbReference>
<dbReference type="BioGRID" id="275742">
    <property type="interactions" value="18"/>
</dbReference>
<dbReference type="FunCoup" id="Q9UU91">
    <property type="interactions" value="118"/>
</dbReference>
<dbReference type="STRING" id="284812.Q9UU91"/>
<dbReference type="iPTMnet" id="Q9UU91"/>
<dbReference type="SwissPalm" id="Q9UU91"/>
<dbReference type="PaxDb" id="4896-SPCC830.08c.1"/>
<dbReference type="EnsemblFungi" id="SPCC830.08c.1">
    <property type="protein sequence ID" value="SPCC830.08c.1:pep"/>
    <property type="gene ID" value="SPCC830.08c"/>
</dbReference>
<dbReference type="GeneID" id="2539171"/>
<dbReference type="KEGG" id="spo:2539171"/>
<dbReference type="PomBase" id="SPCC830.08c">
    <property type="gene designation" value="yop1"/>
</dbReference>
<dbReference type="VEuPathDB" id="FungiDB:SPCC830.08c"/>
<dbReference type="eggNOG" id="KOG1725">
    <property type="taxonomic scope" value="Eukaryota"/>
</dbReference>
<dbReference type="HOGENOM" id="CLU_028431_2_1_1"/>
<dbReference type="InParanoid" id="Q9UU91"/>
<dbReference type="OMA" id="DTQYWVV"/>
<dbReference type="PhylomeDB" id="Q9UU91"/>
<dbReference type="PRO" id="PR:Q9UU91"/>
<dbReference type="Proteomes" id="UP000002485">
    <property type="component" value="Chromosome III"/>
</dbReference>
<dbReference type="GO" id="GO:0032153">
    <property type="term" value="C:cell division site"/>
    <property type="evidence" value="ECO:0000314"/>
    <property type="project" value="PomBase"/>
</dbReference>
<dbReference type="GO" id="GO:0032541">
    <property type="term" value="C:cortical endoplasmic reticulum"/>
    <property type="evidence" value="ECO:0000314"/>
    <property type="project" value="PomBase"/>
</dbReference>
<dbReference type="GO" id="GO:0098826">
    <property type="term" value="C:endoplasmic reticulum tubular network membrane"/>
    <property type="evidence" value="ECO:0000269"/>
    <property type="project" value="PomBase"/>
</dbReference>
<dbReference type="GO" id="GO:0005635">
    <property type="term" value="C:nuclear envelope"/>
    <property type="evidence" value="ECO:0000314"/>
    <property type="project" value="PomBase"/>
</dbReference>
<dbReference type="GO" id="GO:0031965">
    <property type="term" value="C:nuclear membrane"/>
    <property type="evidence" value="ECO:0007669"/>
    <property type="project" value="UniProtKB-SubCell"/>
</dbReference>
<dbReference type="GO" id="GO:0180020">
    <property type="term" value="F:membrane bending activity"/>
    <property type="evidence" value="ECO:0000314"/>
    <property type="project" value="PomBase"/>
</dbReference>
<dbReference type="GO" id="GO:0051301">
    <property type="term" value="P:cell division"/>
    <property type="evidence" value="ECO:0007669"/>
    <property type="project" value="UniProtKB-KW"/>
</dbReference>
<dbReference type="GO" id="GO:0007029">
    <property type="term" value="P:endoplasmic reticulum organization"/>
    <property type="evidence" value="ECO:0000269"/>
    <property type="project" value="PomBase"/>
</dbReference>
<dbReference type="GO" id="GO:1990809">
    <property type="term" value="P:endoplasmic reticulum tubular network membrane organization"/>
    <property type="evidence" value="ECO:0000315"/>
    <property type="project" value="PomBase"/>
</dbReference>
<dbReference type="InterPro" id="IPR004345">
    <property type="entry name" value="TB2_DP1_HVA22"/>
</dbReference>
<dbReference type="PANTHER" id="PTHR12300">
    <property type="entry name" value="HVA22-LIKE PROTEINS"/>
    <property type="match status" value="1"/>
</dbReference>
<dbReference type="PANTHER" id="PTHR12300:SF161">
    <property type="entry name" value="RECEPTOR EXPRESSION-ENHANCING PROTEIN"/>
    <property type="match status" value="1"/>
</dbReference>
<dbReference type="Pfam" id="PF03134">
    <property type="entry name" value="TB2_DP1_HVA22"/>
    <property type="match status" value="1"/>
</dbReference>
<proteinExistence type="evidence at protein level"/>